<comment type="function">
    <text evidence="1">Probably functions as a manganese efflux pump.</text>
</comment>
<comment type="subcellular location">
    <subcellularLocation>
        <location evidence="1">Cell membrane</location>
        <topology evidence="1">Multi-pass membrane protein</topology>
    </subcellularLocation>
</comment>
<comment type="similarity">
    <text evidence="1">Belongs to the MntP (TC 9.B.29) family.</text>
</comment>
<protein>
    <recommendedName>
        <fullName evidence="1">Putative manganese efflux pump MntP</fullName>
    </recommendedName>
</protein>
<name>MNTP_BACHK</name>
<reference key="1">
    <citation type="journal article" date="2006" name="J. Bacteriol.">
        <title>Pathogenomic sequence analysis of Bacillus cereus and Bacillus thuringiensis isolates closely related to Bacillus anthracis.</title>
        <authorList>
            <person name="Han C.S."/>
            <person name="Xie G."/>
            <person name="Challacombe J.F."/>
            <person name="Altherr M.R."/>
            <person name="Bhotika S.S."/>
            <person name="Bruce D."/>
            <person name="Campbell C.S."/>
            <person name="Campbell M.L."/>
            <person name="Chen J."/>
            <person name="Chertkov O."/>
            <person name="Cleland C."/>
            <person name="Dimitrijevic M."/>
            <person name="Doggett N.A."/>
            <person name="Fawcett J.J."/>
            <person name="Glavina T."/>
            <person name="Goodwin L.A."/>
            <person name="Hill K.K."/>
            <person name="Hitchcock P."/>
            <person name="Jackson P.J."/>
            <person name="Keim P."/>
            <person name="Kewalramani A.R."/>
            <person name="Longmire J."/>
            <person name="Lucas S."/>
            <person name="Malfatti S."/>
            <person name="McMurry K."/>
            <person name="Meincke L.J."/>
            <person name="Misra M."/>
            <person name="Moseman B.L."/>
            <person name="Mundt M."/>
            <person name="Munk A.C."/>
            <person name="Okinaka R.T."/>
            <person name="Parson-Quintana B."/>
            <person name="Reilly L.P."/>
            <person name="Richardson P."/>
            <person name="Robinson D.L."/>
            <person name="Rubin E."/>
            <person name="Saunders E."/>
            <person name="Tapia R."/>
            <person name="Tesmer J.G."/>
            <person name="Thayer N."/>
            <person name="Thompson L.S."/>
            <person name="Tice H."/>
            <person name="Ticknor L.O."/>
            <person name="Wills P.L."/>
            <person name="Brettin T.S."/>
            <person name="Gilna P."/>
        </authorList>
    </citation>
    <scope>NUCLEOTIDE SEQUENCE [LARGE SCALE GENOMIC DNA]</scope>
    <source>
        <strain>97-27</strain>
    </source>
</reference>
<accession>Q6HAV9</accession>
<dbReference type="EMBL" id="AE017355">
    <property type="protein sequence ID" value="AAT63826.1"/>
    <property type="molecule type" value="Genomic_DNA"/>
</dbReference>
<dbReference type="RefSeq" id="WP_000142470.1">
    <property type="nucleotide sequence ID" value="NC_005957.1"/>
</dbReference>
<dbReference type="RefSeq" id="YP_039317.1">
    <property type="nucleotide sequence ID" value="NC_005957.1"/>
</dbReference>
<dbReference type="KEGG" id="btk:BT9727_5008"/>
<dbReference type="PATRIC" id="fig|281309.8.peg.5326"/>
<dbReference type="HOGENOM" id="CLU_096410_1_0_9"/>
<dbReference type="Proteomes" id="UP000001301">
    <property type="component" value="Chromosome"/>
</dbReference>
<dbReference type="GO" id="GO:0005886">
    <property type="term" value="C:plasma membrane"/>
    <property type="evidence" value="ECO:0007669"/>
    <property type="project" value="UniProtKB-SubCell"/>
</dbReference>
<dbReference type="GO" id="GO:0005384">
    <property type="term" value="F:manganese ion transmembrane transporter activity"/>
    <property type="evidence" value="ECO:0007669"/>
    <property type="project" value="UniProtKB-UniRule"/>
</dbReference>
<dbReference type="HAMAP" id="MF_01521">
    <property type="entry name" value="MntP_pump"/>
    <property type="match status" value="1"/>
</dbReference>
<dbReference type="InterPro" id="IPR003810">
    <property type="entry name" value="Mntp/YtaF"/>
</dbReference>
<dbReference type="InterPro" id="IPR022929">
    <property type="entry name" value="Put_MntP"/>
</dbReference>
<dbReference type="PANTHER" id="PTHR35529">
    <property type="entry name" value="MANGANESE EFFLUX PUMP MNTP-RELATED"/>
    <property type="match status" value="1"/>
</dbReference>
<dbReference type="PANTHER" id="PTHR35529:SF1">
    <property type="entry name" value="MANGANESE EFFLUX PUMP MNTP-RELATED"/>
    <property type="match status" value="1"/>
</dbReference>
<dbReference type="Pfam" id="PF02659">
    <property type="entry name" value="Mntp"/>
    <property type="match status" value="1"/>
</dbReference>
<evidence type="ECO:0000255" key="1">
    <source>
        <dbReference type="HAMAP-Rule" id="MF_01521"/>
    </source>
</evidence>
<keyword id="KW-1003">Cell membrane</keyword>
<keyword id="KW-0406">Ion transport</keyword>
<keyword id="KW-0464">Manganese</keyword>
<keyword id="KW-0472">Membrane</keyword>
<keyword id="KW-0812">Transmembrane</keyword>
<keyword id="KW-1133">Transmembrane helix</keyword>
<keyword id="KW-0813">Transport</keyword>
<organism>
    <name type="scientific">Bacillus thuringiensis subsp. konkukian (strain 97-27)</name>
    <dbReference type="NCBI Taxonomy" id="281309"/>
    <lineage>
        <taxon>Bacteria</taxon>
        <taxon>Bacillati</taxon>
        <taxon>Bacillota</taxon>
        <taxon>Bacilli</taxon>
        <taxon>Bacillales</taxon>
        <taxon>Bacillaceae</taxon>
        <taxon>Bacillus</taxon>
        <taxon>Bacillus cereus group</taxon>
    </lineage>
</organism>
<gene>
    <name evidence="1" type="primary">mntP</name>
    <name type="ordered locus">BT9727_5008</name>
</gene>
<proteinExistence type="inferred from homology"/>
<sequence>MTFEQLIPLIIMAFALGMDAFSVSLGMGMMALKIRQILYIGVTIGIFHIIMPFIGMVLGRVLSEQYGDIAHFAGAILLIGLGFYIVYSSILENEETRTTPIGISLFVFAFGVSIDSFSVGLSLGIYGAQTIITILLFGFVSMLLAWTGLFIGRHAKGMLGTYGEIVGGIILVGFGLYLLFPI</sequence>
<feature type="chain" id="PRO_0000155634" description="Putative manganese efflux pump MntP">
    <location>
        <begin position="1"/>
        <end position="182"/>
    </location>
</feature>
<feature type="transmembrane region" description="Helical" evidence="1">
    <location>
        <begin position="6"/>
        <end position="26"/>
    </location>
</feature>
<feature type="transmembrane region" description="Helical" evidence="1">
    <location>
        <begin position="37"/>
        <end position="57"/>
    </location>
</feature>
<feature type="transmembrane region" description="Helical" evidence="1">
    <location>
        <begin position="71"/>
        <end position="91"/>
    </location>
</feature>
<feature type="transmembrane region" description="Helical" evidence="1">
    <location>
        <begin position="101"/>
        <end position="121"/>
    </location>
</feature>
<feature type="transmembrane region" description="Helical" evidence="1">
    <location>
        <begin position="131"/>
        <end position="151"/>
    </location>
</feature>
<feature type="transmembrane region" description="Helical" evidence="1">
    <location>
        <begin position="162"/>
        <end position="182"/>
    </location>
</feature>